<sequence length="806" mass="87740">MVHFKNCPDPSLNANSQSHPEFSSELEHIKTRMQNFIKHSVTDQNIEVTDARVTAEGEVTSLLKERLDKEYYRLLSKITREVNVADFGAVPDGRDNTEAFRKAIGNGRVKVHVPAGEYLVQGIKLPSWTTIVGQGKGITVIKLHEDTPAHEWVITNDDYQNGNRNIFVQGMSLDWNPSRQCGVRNPGGQFSSCLTFAKVEYGWIKDVEAINAGLHGIDITSPTYDHLPDTDWTKDGSRYIWIDNCVTYGSGDDGITTHYSEYIFISNCHSGNPRGTEFAEGVSNSNGIEIDDGSRHVWLLNNFTSGNIRGVEVKAHELWPASQNVHIIGHISYRDVRAFDLRHIGHHQITDPESTTAYDVTLIDCSAVEPVFNSLYDAVTPRALVISAYKNVNVSGFTAIGDPDYDYKENPVVALQYRSQNITINGIKIRGFKKAGVDINLSGGSNKTDYIKISNFDIYKSAPKGISIGGGLYNVNILNGTMITDNGTVAIQSPNNQATILGVQSEGYSVAASIKGQTYQQVPINLKGGIQLATTSGFAVNQTSAVIAGTGDITARGERNAVISSSGGSSTEGSRALIASSNNAHIRGNQASRTILSSENIILEEPYTVAGGHQSIKWLLDSVRGNGTFAGAISSSLGGYGEYFESSTGQLIHTGTIVTLRGEKIVPANVGDYMLGVISETSAFISGASSFVWQGRYLTNEFGGFIYETVTDEESGELIRVPKQNPDYDTALEANYHSRAARDEWHVVGLVGQHYVRIDETVNQGDYLTAHNGIGTKATEGSWKVMKITSAYTSEKGYGIALTVIK</sequence>
<feature type="chain" id="PRO_0000390395" description="Putative phage-related protein YobO">
    <location>
        <begin position="1"/>
        <end position="806"/>
    </location>
</feature>
<feature type="repeat" description="PbH1 1">
    <location>
        <begin position="199"/>
        <end position="221"/>
    </location>
</feature>
<feature type="repeat" description="PbH1 2">
    <location>
        <begin position="237"/>
        <end position="259"/>
    </location>
</feature>
<feature type="repeat" description="PbH1 3">
    <location>
        <begin position="260"/>
        <end position="292"/>
    </location>
</feature>
<feature type="repeat" description="PbH1 4">
    <location>
        <begin position="294"/>
        <end position="315"/>
    </location>
</feature>
<feature type="repeat" description="PbH1 5">
    <location>
        <begin position="419"/>
        <end position="441"/>
    </location>
</feature>
<feature type="repeat" description="PbH1 6">
    <location>
        <begin position="448"/>
        <end position="470"/>
    </location>
</feature>
<feature type="region of interest" description="Disordered" evidence="1">
    <location>
        <begin position="1"/>
        <end position="23"/>
    </location>
</feature>
<feature type="compositionally biased region" description="Polar residues" evidence="1">
    <location>
        <begin position="12"/>
        <end position="21"/>
    </location>
</feature>
<evidence type="ECO:0000256" key="1">
    <source>
        <dbReference type="SAM" id="MobiDB-lite"/>
    </source>
</evidence>
<gene>
    <name type="primary">yobO</name>
    <name type="ordered locus">BSU19030</name>
</gene>
<accession>O34433</accession>
<accession>Q796D9</accession>
<reference key="1">
    <citation type="submission" date="1997-10" db="EMBL/GenBank/DDBJ databases">
        <title>Sequence analysis of the Bacillus subtilis chromosome region between the terC and odhAB loci cloned in a yeast artificial chromosome.</title>
        <authorList>
            <person name="Lapidus A."/>
            <person name="Galleron N."/>
            <person name="Sorokin A."/>
            <person name="Ehrlich D."/>
        </authorList>
    </citation>
    <scope>NUCLEOTIDE SEQUENCE [GENOMIC DNA]</scope>
</reference>
<reference key="2">
    <citation type="journal article" date="1997" name="Nature">
        <title>The complete genome sequence of the Gram-positive bacterium Bacillus subtilis.</title>
        <authorList>
            <person name="Kunst F."/>
            <person name="Ogasawara N."/>
            <person name="Moszer I."/>
            <person name="Albertini A.M."/>
            <person name="Alloni G."/>
            <person name="Azevedo V."/>
            <person name="Bertero M.G."/>
            <person name="Bessieres P."/>
            <person name="Bolotin A."/>
            <person name="Borchert S."/>
            <person name="Borriss R."/>
            <person name="Boursier L."/>
            <person name="Brans A."/>
            <person name="Braun M."/>
            <person name="Brignell S.C."/>
            <person name="Bron S."/>
            <person name="Brouillet S."/>
            <person name="Bruschi C.V."/>
            <person name="Caldwell B."/>
            <person name="Capuano V."/>
            <person name="Carter N.M."/>
            <person name="Choi S.-K."/>
            <person name="Codani J.-J."/>
            <person name="Connerton I.F."/>
            <person name="Cummings N.J."/>
            <person name="Daniel R.A."/>
            <person name="Denizot F."/>
            <person name="Devine K.M."/>
            <person name="Duesterhoeft A."/>
            <person name="Ehrlich S.D."/>
            <person name="Emmerson P.T."/>
            <person name="Entian K.-D."/>
            <person name="Errington J."/>
            <person name="Fabret C."/>
            <person name="Ferrari E."/>
            <person name="Foulger D."/>
            <person name="Fritz C."/>
            <person name="Fujita M."/>
            <person name="Fujita Y."/>
            <person name="Fuma S."/>
            <person name="Galizzi A."/>
            <person name="Galleron N."/>
            <person name="Ghim S.-Y."/>
            <person name="Glaser P."/>
            <person name="Goffeau A."/>
            <person name="Golightly E.J."/>
            <person name="Grandi G."/>
            <person name="Guiseppi G."/>
            <person name="Guy B.J."/>
            <person name="Haga K."/>
            <person name="Haiech J."/>
            <person name="Harwood C.R."/>
            <person name="Henaut A."/>
            <person name="Hilbert H."/>
            <person name="Holsappel S."/>
            <person name="Hosono S."/>
            <person name="Hullo M.-F."/>
            <person name="Itaya M."/>
            <person name="Jones L.-M."/>
            <person name="Joris B."/>
            <person name="Karamata D."/>
            <person name="Kasahara Y."/>
            <person name="Klaerr-Blanchard M."/>
            <person name="Klein C."/>
            <person name="Kobayashi Y."/>
            <person name="Koetter P."/>
            <person name="Koningstein G."/>
            <person name="Krogh S."/>
            <person name="Kumano M."/>
            <person name="Kurita K."/>
            <person name="Lapidus A."/>
            <person name="Lardinois S."/>
            <person name="Lauber J."/>
            <person name="Lazarevic V."/>
            <person name="Lee S.-M."/>
            <person name="Levine A."/>
            <person name="Liu H."/>
            <person name="Masuda S."/>
            <person name="Mauel C."/>
            <person name="Medigue C."/>
            <person name="Medina N."/>
            <person name="Mellado R.P."/>
            <person name="Mizuno M."/>
            <person name="Moestl D."/>
            <person name="Nakai S."/>
            <person name="Noback M."/>
            <person name="Noone D."/>
            <person name="O'Reilly M."/>
            <person name="Ogawa K."/>
            <person name="Ogiwara A."/>
            <person name="Oudega B."/>
            <person name="Park S.-H."/>
            <person name="Parro V."/>
            <person name="Pohl T.M."/>
            <person name="Portetelle D."/>
            <person name="Porwollik S."/>
            <person name="Prescott A.M."/>
            <person name="Presecan E."/>
            <person name="Pujic P."/>
            <person name="Purnelle B."/>
            <person name="Rapoport G."/>
            <person name="Rey M."/>
            <person name="Reynolds S."/>
            <person name="Rieger M."/>
            <person name="Rivolta C."/>
            <person name="Rocha E."/>
            <person name="Roche B."/>
            <person name="Rose M."/>
            <person name="Sadaie Y."/>
            <person name="Sato T."/>
            <person name="Scanlan E."/>
            <person name="Schleich S."/>
            <person name="Schroeter R."/>
            <person name="Scoffone F."/>
            <person name="Sekiguchi J."/>
            <person name="Sekowska A."/>
            <person name="Seror S.J."/>
            <person name="Serror P."/>
            <person name="Shin B.-S."/>
            <person name="Soldo B."/>
            <person name="Sorokin A."/>
            <person name="Tacconi E."/>
            <person name="Takagi T."/>
            <person name="Takahashi H."/>
            <person name="Takemaru K."/>
            <person name="Takeuchi M."/>
            <person name="Tamakoshi A."/>
            <person name="Tanaka T."/>
            <person name="Terpstra P."/>
            <person name="Tognoni A."/>
            <person name="Tosato V."/>
            <person name="Uchiyama S."/>
            <person name="Vandenbol M."/>
            <person name="Vannier F."/>
            <person name="Vassarotti A."/>
            <person name="Viari A."/>
            <person name="Wambutt R."/>
            <person name="Wedler E."/>
            <person name="Wedler H."/>
            <person name="Weitzenegger T."/>
            <person name="Winters P."/>
            <person name="Wipat A."/>
            <person name="Yamamoto H."/>
            <person name="Yamane K."/>
            <person name="Yasumoto K."/>
            <person name="Yata K."/>
            <person name="Yoshida K."/>
            <person name="Yoshikawa H.-F."/>
            <person name="Zumstein E."/>
            <person name="Yoshikawa H."/>
            <person name="Danchin A."/>
        </authorList>
    </citation>
    <scope>NUCLEOTIDE SEQUENCE [LARGE SCALE GENOMIC DNA]</scope>
    <source>
        <strain>168</strain>
    </source>
</reference>
<proteinExistence type="predicted"/>
<protein>
    <recommendedName>
        <fullName>Putative phage-related protein YobO</fullName>
    </recommendedName>
</protein>
<dbReference type="EMBL" id="AF027868">
    <property type="protein sequence ID" value="AAB84431.1"/>
    <property type="molecule type" value="Genomic_DNA"/>
</dbReference>
<dbReference type="EMBL" id="AL009126">
    <property type="protein sequence ID" value="CAB13795.1"/>
    <property type="molecule type" value="Genomic_DNA"/>
</dbReference>
<dbReference type="PIR" id="F69899">
    <property type="entry name" value="F69899"/>
</dbReference>
<dbReference type="RefSeq" id="NP_389784.1">
    <property type="nucleotide sequence ID" value="NC_000964.3"/>
</dbReference>
<dbReference type="RefSeq" id="WP_004399426.1">
    <property type="nucleotide sequence ID" value="NZ_OZ025638.1"/>
</dbReference>
<dbReference type="SMR" id="O34433"/>
<dbReference type="FunCoup" id="O34433">
    <property type="interactions" value="175"/>
</dbReference>
<dbReference type="STRING" id="224308.BSU19030"/>
<dbReference type="MEROPS" id="G02.001"/>
<dbReference type="jPOST" id="O34433"/>
<dbReference type="PaxDb" id="224308-BSU19030"/>
<dbReference type="EnsemblBacteria" id="CAB13795">
    <property type="protein sequence ID" value="CAB13795"/>
    <property type="gene ID" value="BSU_19030"/>
</dbReference>
<dbReference type="GeneID" id="939627"/>
<dbReference type="KEGG" id="bsu:BSU19030"/>
<dbReference type="PATRIC" id="fig|224308.179.peg.2081"/>
<dbReference type="eggNOG" id="COG5434">
    <property type="taxonomic scope" value="Bacteria"/>
</dbReference>
<dbReference type="InParanoid" id="O34433"/>
<dbReference type="OrthoDB" id="2501352at2"/>
<dbReference type="BioCyc" id="BSUB:BSU19030-MONOMER"/>
<dbReference type="Proteomes" id="UP000001570">
    <property type="component" value="Chromosome"/>
</dbReference>
<dbReference type="Gene3D" id="2.40.300.10">
    <property type="entry name" value="Head decoration protein D"/>
    <property type="match status" value="1"/>
</dbReference>
<dbReference type="Gene3D" id="2.160.20.10">
    <property type="entry name" value="Single-stranded right-handed beta-helix, Pectin lyase-like"/>
    <property type="match status" value="1"/>
</dbReference>
<dbReference type="Gene3D" id="4.10.80.40">
    <property type="entry name" value="succinate dehydrogenase protein domain"/>
    <property type="match status" value="1"/>
</dbReference>
<dbReference type="InterPro" id="IPR051801">
    <property type="entry name" value="GH28_Enzymes"/>
</dbReference>
<dbReference type="InterPro" id="IPR006626">
    <property type="entry name" value="PbH1"/>
</dbReference>
<dbReference type="InterPro" id="IPR012334">
    <property type="entry name" value="Pectin_lyas_fold"/>
</dbReference>
<dbReference type="InterPro" id="IPR011050">
    <property type="entry name" value="Pectin_lyase_fold/virulence"/>
</dbReference>
<dbReference type="InterPro" id="IPR021865">
    <property type="entry name" value="Peptidase_G2"/>
</dbReference>
<dbReference type="PANTHER" id="PTHR31339">
    <property type="entry name" value="PECTIN LYASE-RELATED"/>
    <property type="match status" value="1"/>
</dbReference>
<dbReference type="PANTHER" id="PTHR31339:SF9">
    <property type="entry name" value="PLASMIN AND FIBRONECTIN-BINDING PROTEIN A"/>
    <property type="match status" value="1"/>
</dbReference>
<dbReference type="Pfam" id="PF11962">
    <property type="entry name" value="Peptidase_G2"/>
    <property type="match status" value="1"/>
</dbReference>
<dbReference type="SMART" id="SM00710">
    <property type="entry name" value="PbH1"/>
    <property type="match status" value="6"/>
</dbReference>
<dbReference type="SUPFAM" id="SSF51126">
    <property type="entry name" value="Pectin lyase-like"/>
    <property type="match status" value="2"/>
</dbReference>
<keyword id="KW-1185">Reference proteome</keyword>
<keyword id="KW-0677">Repeat</keyword>
<organism>
    <name type="scientific">Bacillus subtilis (strain 168)</name>
    <dbReference type="NCBI Taxonomy" id="224308"/>
    <lineage>
        <taxon>Bacteria</taxon>
        <taxon>Bacillati</taxon>
        <taxon>Bacillota</taxon>
        <taxon>Bacilli</taxon>
        <taxon>Bacillales</taxon>
        <taxon>Bacillaceae</taxon>
        <taxon>Bacillus</taxon>
    </lineage>
</organism>
<name>YOBO_BACSU</name>